<evidence type="ECO:0000255" key="1">
    <source>
        <dbReference type="HAMAP-Rule" id="MF_01394"/>
    </source>
</evidence>
<evidence type="ECO:0000305" key="2"/>
<accession>Q21YC7</accession>
<organism>
    <name type="scientific">Albidiferax ferrireducens (strain ATCC BAA-621 / DSM 15236 / T118)</name>
    <name type="common">Rhodoferax ferrireducens</name>
    <dbReference type="NCBI Taxonomy" id="338969"/>
    <lineage>
        <taxon>Bacteria</taxon>
        <taxon>Pseudomonadati</taxon>
        <taxon>Pseudomonadota</taxon>
        <taxon>Betaproteobacteria</taxon>
        <taxon>Burkholderiales</taxon>
        <taxon>Comamonadaceae</taxon>
        <taxon>Rhodoferax</taxon>
    </lineage>
</organism>
<feature type="chain" id="PRO_0000362754" description="NADH-quinone oxidoreductase subunit A">
    <location>
        <begin position="1"/>
        <end position="119"/>
    </location>
</feature>
<feature type="transmembrane region" description="Helical" evidence="1">
    <location>
        <begin position="9"/>
        <end position="29"/>
    </location>
</feature>
<feature type="transmembrane region" description="Helical" evidence="1">
    <location>
        <begin position="63"/>
        <end position="83"/>
    </location>
</feature>
<feature type="transmembrane region" description="Helical" evidence="1">
    <location>
        <begin position="88"/>
        <end position="108"/>
    </location>
</feature>
<dbReference type="EC" id="7.1.1.-" evidence="1"/>
<dbReference type="EMBL" id="CP000267">
    <property type="protein sequence ID" value="ABD69226.1"/>
    <property type="status" value="ALT_INIT"/>
    <property type="molecule type" value="Genomic_DNA"/>
</dbReference>
<dbReference type="RefSeq" id="WP_041791673.1">
    <property type="nucleotide sequence ID" value="NC_007908.1"/>
</dbReference>
<dbReference type="SMR" id="Q21YC7"/>
<dbReference type="STRING" id="338969.Rfer_1493"/>
<dbReference type="KEGG" id="rfr:Rfer_1493"/>
<dbReference type="eggNOG" id="COG0838">
    <property type="taxonomic scope" value="Bacteria"/>
</dbReference>
<dbReference type="HOGENOM" id="CLU_119549_3_1_4"/>
<dbReference type="OrthoDB" id="9791970at2"/>
<dbReference type="Proteomes" id="UP000008332">
    <property type="component" value="Chromosome"/>
</dbReference>
<dbReference type="GO" id="GO:0030964">
    <property type="term" value="C:NADH dehydrogenase complex"/>
    <property type="evidence" value="ECO:0007669"/>
    <property type="project" value="TreeGrafter"/>
</dbReference>
<dbReference type="GO" id="GO:0005886">
    <property type="term" value="C:plasma membrane"/>
    <property type="evidence" value="ECO:0007669"/>
    <property type="project" value="UniProtKB-SubCell"/>
</dbReference>
<dbReference type="GO" id="GO:0008137">
    <property type="term" value="F:NADH dehydrogenase (ubiquinone) activity"/>
    <property type="evidence" value="ECO:0007669"/>
    <property type="project" value="InterPro"/>
</dbReference>
<dbReference type="GO" id="GO:0050136">
    <property type="term" value="F:NADH:ubiquinone reductase (non-electrogenic) activity"/>
    <property type="evidence" value="ECO:0007669"/>
    <property type="project" value="UniProtKB-UniRule"/>
</dbReference>
<dbReference type="GO" id="GO:0048038">
    <property type="term" value="F:quinone binding"/>
    <property type="evidence" value="ECO:0007669"/>
    <property type="project" value="UniProtKB-KW"/>
</dbReference>
<dbReference type="FunFam" id="1.20.58.1610:FF:000004">
    <property type="entry name" value="NADH-quinone oxidoreductase subunit A"/>
    <property type="match status" value="1"/>
</dbReference>
<dbReference type="Gene3D" id="1.20.58.1610">
    <property type="entry name" value="NADH:ubiquinone/plastoquinone oxidoreductase, chain 3"/>
    <property type="match status" value="1"/>
</dbReference>
<dbReference type="HAMAP" id="MF_01394">
    <property type="entry name" value="NDH1_NuoA"/>
    <property type="match status" value="1"/>
</dbReference>
<dbReference type="InterPro" id="IPR023043">
    <property type="entry name" value="NAD(P)H_OxRDtase_bac/plastid"/>
</dbReference>
<dbReference type="InterPro" id="IPR000440">
    <property type="entry name" value="NADH_UbQ/plastoQ_OxRdtase_su3"/>
</dbReference>
<dbReference type="InterPro" id="IPR038430">
    <property type="entry name" value="NDAH_ubi_oxred_su3_sf"/>
</dbReference>
<dbReference type="PANTHER" id="PTHR11058">
    <property type="entry name" value="NADH-UBIQUINONE OXIDOREDUCTASE CHAIN 3"/>
    <property type="match status" value="1"/>
</dbReference>
<dbReference type="PANTHER" id="PTHR11058:SF9">
    <property type="entry name" value="NADH-UBIQUINONE OXIDOREDUCTASE CHAIN 3"/>
    <property type="match status" value="1"/>
</dbReference>
<dbReference type="Pfam" id="PF00507">
    <property type="entry name" value="Oxidored_q4"/>
    <property type="match status" value="1"/>
</dbReference>
<keyword id="KW-0997">Cell inner membrane</keyword>
<keyword id="KW-1003">Cell membrane</keyword>
<keyword id="KW-0472">Membrane</keyword>
<keyword id="KW-0520">NAD</keyword>
<keyword id="KW-0874">Quinone</keyword>
<keyword id="KW-1185">Reference proteome</keyword>
<keyword id="KW-1278">Translocase</keyword>
<keyword id="KW-0812">Transmembrane</keyword>
<keyword id="KW-1133">Transmembrane helix</keyword>
<keyword id="KW-0813">Transport</keyword>
<keyword id="KW-0830">Ubiquinone</keyword>
<reference key="1">
    <citation type="submission" date="2006-02" db="EMBL/GenBank/DDBJ databases">
        <title>Complete sequence of chromosome of Rhodoferax ferrireducens DSM 15236.</title>
        <authorList>
            <person name="Copeland A."/>
            <person name="Lucas S."/>
            <person name="Lapidus A."/>
            <person name="Barry K."/>
            <person name="Detter J.C."/>
            <person name="Glavina del Rio T."/>
            <person name="Hammon N."/>
            <person name="Israni S."/>
            <person name="Pitluck S."/>
            <person name="Brettin T."/>
            <person name="Bruce D."/>
            <person name="Han C."/>
            <person name="Tapia R."/>
            <person name="Gilna P."/>
            <person name="Kiss H."/>
            <person name="Schmutz J."/>
            <person name="Larimer F."/>
            <person name="Land M."/>
            <person name="Kyrpides N."/>
            <person name="Ivanova N."/>
            <person name="Richardson P."/>
        </authorList>
    </citation>
    <scope>NUCLEOTIDE SEQUENCE [LARGE SCALE GENOMIC DNA]</scope>
    <source>
        <strain>ATCC BAA-621 / DSM 15236 / T118</strain>
    </source>
</reference>
<sequence>MSLDQYLPIFLFILVGIGVGVAPQVLGYILGPNLPDSAKNSPYECGFEAFGDARMKFDVRYYLVAILFILFDLEIAFLFPWAVALKDIGALGFWSVMVFLTILVVGFIYEWKKGALDWE</sequence>
<gene>
    <name evidence="1" type="primary">nuoA</name>
    <name type="ordered locus">Rfer_1493</name>
</gene>
<comment type="function">
    <text evidence="1">NDH-1 shuttles electrons from NADH, via FMN and iron-sulfur (Fe-S) centers, to quinones in the respiratory chain. The immediate electron acceptor for the enzyme in this species is believed to be ubiquinone. Couples the redox reaction to proton translocation (for every two electrons transferred, four hydrogen ions are translocated across the cytoplasmic membrane), and thus conserves the redox energy in a proton gradient.</text>
</comment>
<comment type="catalytic activity">
    <reaction evidence="1">
        <text>a quinone + NADH + 5 H(+)(in) = a quinol + NAD(+) + 4 H(+)(out)</text>
        <dbReference type="Rhea" id="RHEA:57888"/>
        <dbReference type="ChEBI" id="CHEBI:15378"/>
        <dbReference type="ChEBI" id="CHEBI:24646"/>
        <dbReference type="ChEBI" id="CHEBI:57540"/>
        <dbReference type="ChEBI" id="CHEBI:57945"/>
        <dbReference type="ChEBI" id="CHEBI:132124"/>
    </reaction>
</comment>
<comment type="subunit">
    <text evidence="1">NDH-1 is composed of 14 different subunits. Subunits NuoA, H, J, K, L, M, N constitute the membrane sector of the complex.</text>
</comment>
<comment type="subcellular location">
    <subcellularLocation>
        <location evidence="1">Cell inner membrane</location>
        <topology evidence="1">Multi-pass membrane protein</topology>
    </subcellularLocation>
</comment>
<comment type="similarity">
    <text evidence="1">Belongs to the complex I subunit 3 family.</text>
</comment>
<comment type="sequence caution" evidence="2">
    <conflict type="erroneous initiation">
        <sequence resource="EMBL-CDS" id="ABD69226"/>
    </conflict>
</comment>
<protein>
    <recommendedName>
        <fullName evidence="1">NADH-quinone oxidoreductase subunit A</fullName>
        <ecNumber evidence="1">7.1.1.-</ecNumber>
    </recommendedName>
    <alternativeName>
        <fullName evidence="1">NADH dehydrogenase I subunit A</fullName>
    </alternativeName>
    <alternativeName>
        <fullName evidence="1">NDH-1 subunit A</fullName>
    </alternativeName>
    <alternativeName>
        <fullName evidence="1">NUO1</fullName>
    </alternativeName>
</protein>
<proteinExistence type="inferred from homology"/>
<name>NUOA_ALBFT</name>